<comment type="function">
    <text evidence="2">Transcription factor that regulates genes involved in amino acid metabolism. Represses the aspB3 gene, coding for an aspartate transaminase, in the presence of L-aspartate. Another target gene is the basal transcriptional regulator tfbB. Also binds its own promoter.</text>
</comment>
<comment type="induction">
    <text evidence="2">Transcripts accumulate during exponential growth. Is also subject to negative autoregulation.</text>
</comment>
<comment type="disruption phenotype">
    <text evidence="2">Leads to strong induction of aspB3 and OE_6130F.</text>
</comment>
<keyword id="KW-0238">DNA-binding</keyword>
<keyword id="KW-0678">Repressor</keyword>
<keyword id="KW-0804">Transcription</keyword>
<keyword id="KW-0805">Transcription regulation</keyword>
<name>LRPA1_HALS3</name>
<feature type="chain" id="PRO_0000428913" description="HTH-type transcriptional regulator LrpA1">
    <location>
        <begin position="1"/>
        <end position="142"/>
    </location>
</feature>
<feature type="domain" description="HTH asnC-type" evidence="1">
    <location>
        <begin position="1"/>
        <end position="72"/>
    </location>
</feature>
<feature type="DNA-binding region" description="H-T-H motif" evidence="1">
    <location>
        <begin position="22"/>
        <end position="41"/>
    </location>
</feature>
<evidence type="ECO:0000255" key="1">
    <source>
        <dbReference type="PROSITE-ProRule" id="PRU00319"/>
    </source>
</evidence>
<evidence type="ECO:0000269" key="2">
    <source>
    </source>
</evidence>
<organism>
    <name type="scientific">Halobacterium salinarum (strain ATCC 29341 / DSM 671 / R1)</name>
    <dbReference type="NCBI Taxonomy" id="478009"/>
    <lineage>
        <taxon>Archaea</taxon>
        <taxon>Methanobacteriati</taxon>
        <taxon>Methanobacteriota</taxon>
        <taxon>Stenosarchaea group</taxon>
        <taxon>Halobacteria</taxon>
        <taxon>Halobacteriales</taxon>
        <taxon>Halobacteriaceae</taxon>
        <taxon>Halobacterium</taxon>
        <taxon>Halobacterium salinarum NRC-34001</taxon>
    </lineage>
</organism>
<reference key="1">
    <citation type="journal article" date="2008" name="Genomics">
        <title>Evolution in the laboratory: the genome of Halobacterium salinarum strain R1 compared to that of strain NRC-1.</title>
        <authorList>
            <person name="Pfeiffer F."/>
            <person name="Schuster S.C."/>
            <person name="Broicher A."/>
            <person name="Falb M."/>
            <person name="Palm P."/>
            <person name="Rodewald K."/>
            <person name="Ruepp A."/>
            <person name="Soppa J."/>
            <person name="Tittor J."/>
            <person name="Oesterhelt D."/>
        </authorList>
    </citation>
    <scope>NUCLEOTIDE SEQUENCE [LARGE SCALE GENOMIC DNA]</scope>
    <source>
        <strain>ATCC 29341 / DSM 671 / R1</strain>
    </source>
</reference>
<reference key="2">
    <citation type="journal article" date="2010" name="BMC Mol. Biol.">
        <title>Transcriptional control by two leucine-responsive regulatory proteins in Halobacterium salinarum R1.</title>
        <authorList>
            <person name="Schwaiger R."/>
            <person name="Schwarz C."/>
            <person name="Furtwangler K."/>
            <person name="Tarasov V."/>
            <person name="Wende A."/>
            <person name="Oesterhelt D."/>
        </authorList>
    </citation>
    <scope>FUNCTION</scope>
    <scope>DNA-BINDING</scope>
    <scope>DISRUPTION PHENOTYPE</scope>
    <scope>INDUCTION</scope>
    <source>
        <strain>ATCC 29341 / DSM 671 / R1</strain>
    </source>
</reference>
<protein>
    <recommendedName>
        <fullName>HTH-type transcriptional regulator LrpA1</fullName>
    </recommendedName>
</protein>
<proteinExistence type="evidence at protein level"/>
<gene>
    <name type="primary">lrpA1</name>
    <name type="ordered locus">OE_2621R</name>
</gene>
<dbReference type="EMBL" id="AM774415">
    <property type="protein sequence ID" value="CAP13789.1"/>
    <property type="molecule type" value="Genomic_DNA"/>
</dbReference>
<dbReference type="RefSeq" id="WP_010902807.1">
    <property type="nucleotide sequence ID" value="NC_010364.1"/>
</dbReference>
<dbReference type="SMR" id="B0R4X4"/>
<dbReference type="EnsemblBacteria" id="CAP13789">
    <property type="protein sequence ID" value="CAP13789"/>
    <property type="gene ID" value="OE_2621R"/>
</dbReference>
<dbReference type="GeneID" id="89349486"/>
<dbReference type="KEGG" id="hsl:OE_2621R"/>
<dbReference type="HOGENOM" id="CLU_091233_5_4_2"/>
<dbReference type="PhylomeDB" id="B0R4X4"/>
<dbReference type="Proteomes" id="UP000001321">
    <property type="component" value="Chromosome"/>
</dbReference>
<dbReference type="GO" id="GO:0005829">
    <property type="term" value="C:cytosol"/>
    <property type="evidence" value="ECO:0007669"/>
    <property type="project" value="TreeGrafter"/>
</dbReference>
<dbReference type="GO" id="GO:0043565">
    <property type="term" value="F:sequence-specific DNA binding"/>
    <property type="evidence" value="ECO:0007669"/>
    <property type="project" value="InterPro"/>
</dbReference>
<dbReference type="GO" id="GO:0043200">
    <property type="term" value="P:response to amino acid"/>
    <property type="evidence" value="ECO:0007669"/>
    <property type="project" value="TreeGrafter"/>
</dbReference>
<dbReference type="CDD" id="cd00090">
    <property type="entry name" value="HTH_ARSR"/>
    <property type="match status" value="1"/>
</dbReference>
<dbReference type="Gene3D" id="3.30.70.920">
    <property type="match status" value="1"/>
</dbReference>
<dbReference type="Gene3D" id="1.10.10.10">
    <property type="entry name" value="Winged helix-like DNA-binding domain superfamily/Winged helix DNA-binding domain"/>
    <property type="match status" value="1"/>
</dbReference>
<dbReference type="InterPro" id="IPR011991">
    <property type="entry name" value="ArsR-like_HTH"/>
</dbReference>
<dbReference type="InterPro" id="IPR000485">
    <property type="entry name" value="AsnC-type_HTH_dom"/>
</dbReference>
<dbReference type="InterPro" id="IPR011008">
    <property type="entry name" value="Dimeric_a/b-barrel"/>
</dbReference>
<dbReference type="InterPro" id="IPR049859">
    <property type="entry name" value="LrpA1"/>
</dbReference>
<dbReference type="InterPro" id="IPR019888">
    <property type="entry name" value="Tscrpt_reg_AsnC-like"/>
</dbReference>
<dbReference type="InterPro" id="IPR019887">
    <property type="entry name" value="Tscrpt_reg_AsnC/Lrp_C"/>
</dbReference>
<dbReference type="InterPro" id="IPR036388">
    <property type="entry name" value="WH-like_DNA-bd_sf"/>
</dbReference>
<dbReference type="InterPro" id="IPR036390">
    <property type="entry name" value="WH_DNA-bd_sf"/>
</dbReference>
<dbReference type="NCBIfam" id="NF041395">
    <property type="entry name" value="TranRegLrpA1_Halo"/>
    <property type="match status" value="1"/>
</dbReference>
<dbReference type="PANTHER" id="PTHR30154:SF53">
    <property type="entry name" value="HTH-TYPE TRANSCRIPTIONAL REGULATOR LRPC"/>
    <property type="match status" value="1"/>
</dbReference>
<dbReference type="PANTHER" id="PTHR30154">
    <property type="entry name" value="LEUCINE-RESPONSIVE REGULATORY PROTEIN"/>
    <property type="match status" value="1"/>
</dbReference>
<dbReference type="Pfam" id="PF01037">
    <property type="entry name" value="AsnC_trans_reg"/>
    <property type="match status" value="1"/>
</dbReference>
<dbReference type="Pfam" id="PF13412">
    <property type="entry name" value="HTH_24"/>
    <property type="match status" value="1"/>
</dbReference>
<dbReference type="SMART" id="SM00344">
    <property type="entry name" value="HTH_ASNC"/>
    <property type="match status" value="1"/>
</dbReference>
<dbReference type="SUPFAM" id="SSF54909">
    <property type="entry name" value="Dimeric alpha+beta barrel"/>
    <property type="match status" value="1"/>
</dbReference>
<dbReference type="SUPFAM" id="SSF46785">
    <property type="entry name" value="Winged helix' DNA-binding domain"/>
    <property type="match status" value="1"/>
</dbReference>
<dbReference type="PROSITE" id="PS50956">
    <property type="entry name" value="HTH_ASNC_2"/>
    <property type="match status" value="1"/>
</dbReference>
<accession>B0R4X4</accession>
<sequence>MSTESTEERILAALEEDAQASYAAIAERADVSKPTVRKYIDQLESDGVIVGYSADVDPKKLSGQSIAMVGIDVASEQYVEATRTLQELDSVQALYSSSGDHMLMAEVRAADGDALGDVISDEVLAIDGVTAAHPSFLQERLK</sequence>